<accession>Q8DPV9</accession>
<accession>G8K019</accession>
<accession>O06452</accession>
<accession>Q7D4B3</accession>
<reference key="1">
    <citation type="journal article" date="1997" name="J. Bacteriol.">
        <title>A novel resistance mechanism against beta-lactams in Streptococcus pneumoniae involves CpoA, a putative glycosyltransferase.</title>
        <authorList>
            <person name="Grebe T."/>
            <person name="Paik J."/>
            <person name="Hakenbeck R."/>
        </authorList>
    </citation>
    <scope>NUCLEOTIDE SEQUENCE [GENOMIC DNA]</scope>
    <scope>FUNCTION IN ANTIBIOTIC RESISTANCE</scope>
    <scope>SUBCELLULAR LOCATION</scope>
    <source>
        <strain>ATCC BAA-255 / R6</strain>
    </source>
</reference>
<reference key="2">
    <citation type="journal article" date="2001" name="J. Bacteriol.">
        <title>Genome of the bacterium Streptococcus pneumoniae strain R6.</title>
        <authorList>
            <person name="Hoskins J."/>
            <person name="Alborn W.E. Jr."/>
            <person name="Arnold J."/>
            <person name="Blaszczak L.C."/>
            <person name="Burgett S."/>
            <person name="DeHoff B.S."/>
            <person name="Estrem S.T."/>
            <person name="Fritz L."/>
            <person name="Fu D.-J."/>
            <person name="Fuller W."/>
            <person name="Geringer C."/>
            <person name="Gilmour R."/>
            <person name="Glass J.S."/>
            <person name="Khoja H."/>
            <person name="Kraft A.R."/>
            <person name="Lagace R.E."/>
            <person name="LeBlanc D.J."/>
            <person name="Lee L.N."/>
            <person name="Lefkowitz E.J."/>
            <person name="Lu J."/>
            <person name="Matsushima P."/>
            <person name="McAhren S.M."/>
            <person name="McHenney M."/>
            <person name="McLeaster K."/>
            <person name="Mundy C.W."/>
            <person name="Nicas T.I."/>
            <person name="Norris F.H."/>
            <person name="O'Gara M."/>
            <person name="Peery R.B."/>
            <person name="Robertson G.T."/>
            <person name="Rockey P."/>
            <person name="Sun P.-M."/>
            <person name="Winkler M.E."/>
            <person name="Yang Y."/>
            <person name="Young-Bellido M."/>
            <person name="Zhao G."/>
            <person name="Zook C.A."/>
            <person name="Baltz R.H."/>
            <person name="Jaskunas S.R."/>
            <person name="Rosteck P.R. Jr."/>
            <person name="Skatrud P.L."/>
            <person name="Glass J.I."/>
        </authorList>
    </citation>
    <scope>NUCLEOTIDE SEQUENCE [LARGE SCALE GENOMIC DNA]</scope>
    <source>
        <strain>ATCC BAA-255 / R6</strain>
    </source>
</reference>
<reference key="3">
    <citation type="journal article" date="2003" name="J. Biol. Chem.">
        <title>Structural features of glycosyltransferases synthesizing major bilayer and nonbilayer-prone membrane lipids in Acholeplasma laidlawii and Streptococcus pneumoniae.</title>
        <authorList>
            <person name="Edman M."/>
            <person name="Berg S."/>
            <person name="Storm P."/>
            <person name="Wikstrom M."/>
            <person name="Vikstrom S."/>
            <person name="Ohman A."/>
            <person name="Wieslander A."/>
        </authorList>
    </citation>
    <scope>FUNCTION</scope>
    <scope>CATALYTIC ACTIVITY</scope>
    <scope>SUBSTRATE SPECIFICITY</scope>
    <scope>ACTIVITY REGULATION</scope>
    <source>
        <strain>CCUG 3030</strain>
    </source>
</reference>
<proteinExistence type="evidence at protein level"/>
<gene>
    <name type="primary">cpoA</name>
    <name type="ordered locus">spr0981</name>
</gene>
<keyword id="KW-0046">Antibiotic resistance</keyword>
<keyword id="KW-0119">Carbohydrate metabolism</keyword>
<keyword id="KW-1003">Cell membrane</keyword>
<keyword id="KW-0319">Glycerol metabolism</keyword>
<keyword id="KW-0328">Glycosyltransferase</keyword>
<keyword id="KW-0444">Lipid biosynthesis</keyword>
<keyword id="KW-0443">Lipid metabolism</keyword>
<keyword id="KW-0460">Magnesium</keyword>
<keyword id="KW-0472">Membrane</keyword>
<keyword id="KW-1185">Reference proteome</keyword>
<keyword id="KW-0808">Transferase</keyword>
<dbReference type="EC" id="2.4.1.-"/>
<dbReference type="EMBL" id="Y11463">
    <property type="protein sequence ID" value="CAA72249.1"/>
    <property type="molecule type" value="Genomic_DNA"/>
</dbReference>
<dbReference type="EMBL" id="AE007317">
    <property type="protein sequence ID" value="AAK99785.1"/>
    <property type="molecule type" value="Genomic_DNA"/>
</dbReference>
<dbReference type="PIR" id="E97994">
    <property type="entry name" value="E97994"/>
</dbReference>
<dbReference type="RefSeq" id="NP_358575.1">
    <property type="nucleotide sequence ID" value="NC_003098.1"/>
</dbReference>
<dbReference type="RefSeq" id="WP_010976517.1">
    <property type="nucleotide sequence ID" value="NC_003098.1"/>
</dbReference>
<dbReference type="SMR" id="Q8DPV9"/>
<dbReference type="STRING" id="171101.spr0981"/>
<dbReference type="CAZy" id="GT4">
    <property type="family name" value="Glycosyltransferase Family 4"/>
</dbReference>
<dbReference type="KEGG" id="spr:spr0981"/>
<dbReference type="PATRIC" id="fig|171101.6.peg.1067"/>
<dbReference type="eggNOG" id="COG0438">
    <property type="taxonomic scope" value="Bacteria"/>
</dbReference>
<dbReference type="HOGENOM" id="CLU_055069_1_0_9"/>
<dbReference type="BioCyc" id="MetaCyc:MONOMER-20029"/>
<dbReference type="Proteomes" id="UP000000586">
    <property type="component" value="Chromosome"/>
</dbReference>
<dbReference type="GO" id="GO:0005886">
    <property type="term" value="C:plasma membrane"/>
    <property type="evidence" value="ECO:0007669"/>
    <property type="project" value="UniProtKB-SubCell"/>
</dbReference>
<dbReference type="GO" id="GO:0016758">
    <property type="term" value="F:hexosyltransferase activity"/>
    <property type="evidence" value="ECO:0000314"/>
    <property type="project" value="UniProtKB"/>
</dbReference>
<dbReference type="GO" id="GO:0006071">
    <property type="term" value="P:glycerol metabolic process"/>
    <property type="evidence" value="ECO:0007669"/>
    <property type="project" value="UniProtKB-KW"/>
</dbReference>
<dbReference type="GO" id="GO:0046467">
    <property type="term" value="P:membrane lipid biosynthetic process"/>
    <property type="evidence" value="ECO:0000314"/>
    <property type="project" value="UniProtKB"/>
</dbReference>
<dbReference type="GO" id="GO:0046677">
    <property type="term" value="P:response to antibiotic"/>
    <property type="evidence" value="ECO:0007669"/>
    <property type="project" value="UniProtKB-KW"/>
</dbReference>
<dbReference type="CDD" id="cd03801">
    <property type="entry name" value="GT4_PimA-like"/>
    <property type="match status" value="1"/>
</dbReference>
<dbReference type="FunFam" id="3.40.50.2000:FF:000315">
    <property type="entry name" value="Glycosyltransferase, group 1 family protein"/>
    <property type="match status" value="1"/>
</dbReference>
<dbReference type="Gene3D" id="3.40.50.2000">
    <property type="entry name" value="Glycogen Phosphorylase B"/>
    <property type="match status" value="2"/>
</dbReference>
<dbReference type="InterPro" id="IPR001296">
    <property type="entry name" value="Glyco_trans_1"/>
</dbReference>
<dbReference type="InterPro" id="IPR028098">
    <property type="entry name" value="Glyco_trans_4-like_N"/>
</dbReference>
<dbReference type="PANTHER" id="PTHR46401">
    <property type="entry name" value="GLYCOSYLTRANSFERASE WBBK-RELATED"/>
    <property type="match status" value="1"/>
</dbReference>
<dbReference type="PANTHER" id="PTHR46401:SF2">
    <property type="entry name" value="GLYCOSYLTRANSFERASE WBBK-RELATED"/>
    <property type="match status" value="1"/>
</dbReference>
<dbReference type="Pfam" id="PF13439">
    <property type="entry name" value="Glyco_transf_4"/>
    <property type="match status" value="1"/>
</dbReference>
<dbReference type="Pfam" id="PF00534">
    <property type="entry name" value="Glycos_transf_1"/>
    <property type="match status" value="1"/>
</dbReference>
<dbReference type="SUPFAM" id="SSF53756">
    <property type="entry name" value="UDP-Glycosyltransferase/glycogen phosphorylase"/>
    <property type="match status" value="1"/>
</dbReference>
<protein>
    <recommendedName>
        <fullName>Alpha-galactosylglucosyldiacylglycerol synthase</fullName>
        <ecNumber>2.4.1.-</ecNumber>
    </recommendedName>
</protein>
<sequence>MRKFPLFSSSLSFLLLILFKENDIIVVMEKKKLRINMLSSSEKVAGQGVSGAYRELVRLLHRAAKDQLIVTENLPIEADVTHFHTIDFPYYLSTFQKKRSGRKIGYVHFLPATLEGSLKIPFFLKGIVKRYVFSFYNRMEHLVVVNPMFIEDLVAAGIPREKVTYIPNFVNKEKWHPLPQEEVVRLRTDLGLSDNQFIVVGAGQVQKRKGIDDFIRLAEELPQITFIWAGGFSFGGMTDGYEHYKTIMENPPKNLIFPGIVSPERMRELYALADLFLLPSYNELFPMTILEAASCEAPIMLRDLDLYKVILEGNYRATAGREEMKEAILEYQANPAVLKDLKEKAKNISREYSEEHLLQIWLDFYEKQAALGRK</sequence>
<evidence type="ECO:0000250" key="1"/>
<evidence type="ECO:0000269" key="2">
    <source>
    </source>
</evidence>
<evidence type="ECO:0000269" key="3">
    <source>
    </source>
</evidence>
<evidence type="ECO:0000305" key="4"/>
<feature type="chain" id="PRO_0000425271" description="Alpha-galactosylglucosyldiacylglycerol synthase">
    <location>
        <begin position="1"/>
        <end position="374"/>
    </location>
</feature>
<feature type="sequence conflict" description="In Ref. 1; CAA72249." evidence="4" ref="1">
    <original>T</original>
    <variation>K</variation>
    <location>
        <position position="246"/>
    </location>
</feature>
<comment type="function">
    <text evidence="2 3">Galactosyltransferase involved in the biosynthesis of the bilayer-forming membrane lipid alpha-galactosyl-glucosyldiacylglycerol which is involved in maintaining constant nonbilayer/bilayer conditions (curvature packing stress). Also involved in the beta-lactam resistance. Catalyzes the transfer of a galactosyl residue from UDP-Gal to alpha-glucosyl-DAG (1,2-diacyl-3-O-(alpha-D-glucopyranosyl)-sn-glycerol) acceptor to form the corresponding galactosyl-glycosyl-DAG product (3-O-alpha-(D-galactopyranosyl-alpha-(1-&gt;2)-D-glucopyranosyl)-1,2-diacyl-sn-glycerol). It can only use UDP-Gal as sugar donor and alpha-glucosyl-DAG is the preferred sugar acceptor.</text>
</comment>
<comment type="catalytic activity">
    <reaction evidence="2">
        <text>a 1,2-diacyl-3-O-(alpha-D-glucopyranosyl)-sn-glycerol + UDP-alpha-D-galactose = a 1,2-diacyl-3-O-[alpha-D-galactopyranosyl-(1-&gt;2)-alpha-D-glucopyranosyl]-sn-glycerol + UDP + H(+)</text>
        <dbReference type="Rhea" id="RHEA:52696"/>
        <dbReference type="ChEBI" id="CHEBI:15378"/>
        <dbReference type="ChEBI" id="CHEBI:17670"/>
        <dbReference type="ChEBI" id="CHEBI:58223"/>
        <dbReference type="ChEBI" id="CHEBI:66914"/>
        <dbReference type="ChEBI" id="CHEBI:136769"/>
    </reaction>
</comment>
<comment type="cofactor">
    <cofactor evidence="1">
        <name>Mg(2+)</name>
        <dbReference type="ChEBI" id="CHEBI:18420"/>
    </cofactor>
</comment>
<comment type="activity regulation">
    <text evidence="2">Activated by the negatively charged lipid phosphatidylglycerol (PG).</text>
</comment>
<comment type="subcellular location">
    <subcellularLocation>
        <location evidence="3">Cell membrane</location>
    </subcellularLocation>
</comment>
<comment type="similarity">
    <text evidence="4">Belongs to the glycosyltransferase group 1 family. Glycosyltransferase 4 subfamily.</text>
</comment>
<name>AGGDS_STRR6</name>
<organism>
    <name type="scientific">Streptococcus pneumoniae (strain ATCC BAA-255 / R6)</name>
    <dbReference type="NCBI Taxonomy" id="171101"/>
    <lineage>
        <taxon>Bacteria</taxon>
        <taxon>Bacillati</taxon>
        <taxon>Bacillota</taxon>
        <taxon>Bacilli</taxon>
        <taxon>Lactobacillales</taxon>
        <taxon>Streptococcaceae</taxon>
        <taxon>Streptococcus</taxon>
    </lineage>
</organism>